<accession>Q9PB19</accession>
<proteinExistence type="inferred from homology"/>
<reference key="1">
    <citation type="journal article" date="2000" name="Nature">
        <title>The genome sequence of the plant pathogen Xylella fastidiosa.</title>
        <authorList>
            <person name="Simpson A.J.G."/>
            <person name="Reinach F.C."/>
            <person name="Arruda P."/>
            <person name="Abreu F.A."/>
            <person name="Acencio M."/>
            <person name="Alvarenga R."/>
            <person name="Alves L.M.C."/>
            <person name="Araya J.E."/>
            <person name="Baia G.S."/>
            <person name="Baptista C.S."/>
            <person name="Barros M.H."/>
            <person name="Bonaccorsi E.D."/>
            <person name="Bordin S."/>
            <person name="Bove J.M."/>
            <person name="Briones M.R.S."/>
            <person name="Bueno M.R.P."/>
            <person name="Camargo A.A."/>
            <person name="Camargo L.E.A."/>
            <person name="Carraro D.M."/>
            <person name="Carrer H."/>
            <person name="Colauto N.B."/>
            <person name="Colombo C."/>
            <person name="Costa F.F."/>
            <person name="Costa M.C.R."/>
            <person name="Costa-Neto C.M."/>
            <person name="Coutinho L.L."/>
            <person name="Cristofani M."/>
            <person name="Dias-Neto E."/>
            <person name="Docena C."/>
            <person name="El-Dorry H."/>
            <person name="Facincani A.P."/>
            <person name="Ferreira A.J.S."/>
            <person name="Ferreira V.C.A."/>
            <person name="Ferro J.A."/>
            <person name="Fraga J.S."/>
            <person name="Franca S.C."/>
            <person name="Franco M.C."/>
            <person name="Frohme M."/>
            <person name="Furlan L.R."/>
            <person name="Garnier M."/>
            <person name="Goldman G.H."/>
            <person name="Goldman M.H.S."/>
            <person name="Gomes S.L."/>
            <person name="Gruber A."/>
            <person name="Ho P.L."/>
            <person name="Hoheisel J.D."/>
            <person name="Junqueira M.L."/>
            <person name="Kemper E.L."/>
            <person name="Kitajima J.P."/>
            <person name="Krieger J.E."/>
            <person name="Kuramae E.E."/>
            <person name="Laigret F."/>
            <person name="Lambais M.R."/>
            <person name="Leite L.C.C."/>
            <person name="Lemos E.G.M."/>
            <person name="Lemos M.V.F."/>
            <person name="Lopes S.A."/>
            <person name="Lopes C.R."/>
            <person name="Machado J.A."/>
            <person name="Machado M.A."/>
            <person name="Madeira A.M.B.N."/>
            <person name="Madeira H.M.F."/>
            <person name="Marino C.L."/>
            <person name="Marques M.V."/>
            <person name="Martins E.A.L."/>
            <person name="Martins E.M.F."/>
            <person name="Matsukuma A.Y."/>
            <person name="Menck C.F.M."/>
            <person name="Miracca E.C."/>
            <person name="Miyaki C.Y."/>
            <person name="Monteiro-Vitorello C.B."/>
            <person name="Moon D.H."/>
            <person name="Nagai M.A."/>
            <person name="Nascimento A.L.T.O."/>
            <person name="Netto L.E.S."/>
            <person name="Nhani A. Jr."/>
            <person name="Nobrega F.G."/>
            <person name="Nunes L.R."/>
            <person name="Oliveira M.A."/>
            <person name="de Oliveira M.C."/>
            <person name="de Oliveira R.C."/>
            <person name="Palmieri D.A."/>
            <person name="Paris A."/>
            <person name="Peixoto B.R."/>
            <person name="Pereira G.A.G."/>
            <person name="Pereira H.A. Jr."/>
            <person name="Pesquero J.B."/>
            <person name="Quaggio R.B."/>
            <person name="Roberto P.G."/>
            <person name="Rodrigues V."/>
            <person name="de Rosa A.J.M."/>
            <person name="de Rosa V.E. Jr."/>
            <person name="de Sa R.G."/>
            <person name="Santelli R.V."/>
            <person name="Sawasaki H.E."/>
            <person name="da Silva A.C.R."/>
            <person name="da Silva A.M."/>
            <person name="da Silva F.R."/>
            <person name="Silva W.A. Jr."/>
            <person name="da Silveira J.F."/>
            <person name="Silvestri M.L.Z."/>
            <person name="Siqueira W.J."/>
            <person name="de Souza A.A."/>
            <person name="de Souza A.P."/>
            <person name="Terenzi M.F."/>
            <person name="Truffi D."/>
            <person name="Tsai S.M."/>
            <person name="Tsuhako M.H."/>
            <person name="Vallada H."/>
            <person name="Van Sluys M.A."/>
            <person name="Verjovski-Almeida S."/>
            <person name="Vettore A.L."/>
            <person name="Zago M.A."/>
            <person name="Zatz M."/>
            <person name="Meidanis J."/>
            <person name="Setubal J.C."/>
        </authorList>
    </citation>
    <scope>NUCLEOTIDE SEQUENCE [LARGE SCALE GENOMIC DNA]</scope>
    <source>
        <strain>9a5c</strain>
    </source>
</reference>
<name>SERC_XYLFA</name>
<sequence length="362" mass="39615">MTMRIFNFSPGPATLPEPVLRQAQDEMLEWNAVGASVMEISHRTVEFMELAKGIESDLRCLLGVPDDYAVLFLSGGATTQQALLPLNFAAPGQTADYVVTGHWSKTALKQASPYVNINVVADGERGGFQHIPSRAGWRLSKDAAYVHMTANETIHGVEFRQTPDVGDVPLFADFSSSIAADLIDVSKYDLIYAGAQKNLGPVGICVVIVRRTLLERTGQPRADIFTYASHAERDSMLNTPPTFNWYLLGLTVKWMLAEGGVQEFARRNQAKAQLVYQTIDQSGGFYRNGVAAAVRSRMNIPFFLPNVEQDARFAAEAKAAGLLSLKGHKALGGIRASLYNAMPLAGVQALVAFMHDFQQRYG</sequence>
<dbReference type="EC" id="2.6.1.52" evidence="1"/>
<dbReference type="EMBL" id="AE003849">
    <property type="protein sequence ID" value="AAF85125.1"/>
    <property type="molecule type" value="Genomic_DNA"/>
</dbReference>
<dbReference type="PIR" id="C82572">
    <property type="entry name" value="C82572"/>
</dbReference>
<dbReference type="RefSeq" id="WP_010894772.1">
    <property type="nucleotide sequence ID" value="NC_002488.3"/>
</dbReference>
<dbReference type="SMR" id="Q9PB19"/>
<dbReference type="STRING" id="160492.XF_2326"/>
<dbReference type="KEGG" id="xfa:XF_2326"/>
<dbReference type="eggNOG" id="COG1932">
    <property type="taxonomic scope" value="Bacteria"/>
</dbReference>
<dbReference type="HOGENOM" id="CLU_034866_0_2_6"/>
<dbReference type="UniPathway" id="UPA00135">
    <property type="reaction ID" value="UER00197"/>
</dbReference>
<dbReference type="UniPathway" id="UPA00244">
    <property type="reaction ID" value="UER00311"/>
</dbReference>
<dbReference type="Proteomes" id="UP000000812">
    <property type="component" value="Chromosome"/>
</dbReference>
<dbReference type="GO" id="GO:0005737">
    <property type="term" value="C:cytoplasm"/>
    <property type="evidence" value="ECO:0007669"/>
    <property type="project" value="UniProtKB-SubCell"/>
</dbReference>
<dbReference type="GO" id="GO:0004648">
    <property type="term" value="F:O-phospho-L-serine:2-oxoglutarate aminotransferase activity"/>
    <property type="evidence" value="ECO:0007669"/>
    <property type="project" value="UniProtKB-UniRule"/>
</dbReference>
<dbReference type="GO" id="GO:0030170">
    <property type="term" value="F:pyridoxal phosphate binding"/>
    <property type="evidence" value="ECO:0007669"/>
    <property type="project" value="UniProtKB-UniRule"/>
</dbReference>
<dbReference type="GO" id="GO:0006564">
    <property type="term" value="P:L-serine biosynthetic process"/>
    <property type="evidence" value="ECO:0007669"/>
    <property type="project" value="UniProtKB-UniRule"/>
</dbReference>
<dbReference type="GO" id="GO:0008615">
    <property type="term" value="P:pyridoxine biosynthetic process"/>
    <property type="evidence" value="ECO:0007669"/>
    <property type="project" value="UniProtKB-UniRule"/>
</dbReference>
<dbReference type="FunFam" id="3.40.640.10:FF:000010">
    <property type="entry name" value="Phosphoserine aminotransferase"/>
    <property type="match status" value="1"/>
</dbReference>
<dbReference type="FunFam" id="3.90.1150.10:FF:000006">
    <property type="entry name" value="Phosphoserine aminotransferase"/>
    <property type="match status" value="1"/>
</dbReference>
<dbReference type="Gene3D" id="3.90.1150.10">
    <property type="entry name" value="Aspartate Aminotransferase, domain 1"/>
    <property type="match status" value="1"/>
</dbReference>
<dbReference type="Gene3D" id="3.40.640.10">
    <property type="entry name" value="Type I PLP-dependent aspartate aminotransferase-like (Major domain)"/>
    <property type="match status" value="1"/>
</dbReference>
<dbReference type="HAMAP" id="MF_00160">
    <property type="entry name" value="SerC_aminotrans_5"/>
    <property type="match status" value="1"/>
</dbReference>
<dbReference type="InterPro" id="IPR000192">
    <property type="entry name" value="Aminotrans_V_dom"/>
</dbReference>
<dbReference type="InterPro" id="IPR022278">
    <property type="entry name" value="Pser_aminoTfrase"/>
</dbReference>
<dbReference type="InterPro" id="IPR015424">
    <property type="entry name" value="PyrdxlP-dep_Trfase"/>
</dbReference>
<dbReference type="InterPro" id="IPR015421">
    <property type="entry name" value="PyrdxlP-dep_Trfase_major"/>
</dbReference>
<dbReference type="InterPro" id="IPR015422">
    <property type="entry name" value="PyrdxlP-dep_Trfase_small"/>
</dbReference>
<dbReference type="NCBIfam" id="NF003764">
    <property type="entry name" value="PRK05355.1"/>
    <property type="match status" value="1"/>
</dbReference>
<dbReference type="NCBIfam" id="TIGR01364">
    <property type="entry name" value="serC_1"/>
    <property type="match status" value="1"/>
</dbReference>
<dbReference type="PANTHER" id="PTHR43247">
    <property type="entry name" value="PHOSPHOSERINE AMINOTRANSFERASE"/>
    <property type="match status" value="1"/>
</dbReference>
<dbReference type="PANTHER" id="PTHR43247:SF1">
    <property type="entry name" value="PHOSPHOSERINE AMINOTRANSFERASE"/>
    <property type="match status" value="1"/>
</dbReference>
<dbReference type="Pfam" id="PF00266">
    <property type="entry name" value="Aminotran_5"/>
    <property type="match status" value="1"/>
</dbReference>
<dbReference type="PIRSF" id="PIRSF000525">
    <property type="entry name" value="SerC"/>
    <property type="match status" value="1"/>
</dbReference>
<dbReference type="SUPFAM" id="SSF53383">
    <property type="entry name" value="PLP-dependent transferases"/>
    <property type="match status" value="1"/>
</dbReference>
<evidence type="ECO:0000255" key="1">
    <source>
        <dbReference type="HAMAP-Rule" id="MF_00160"/>
    </source>
</evidence>
<gene>
    <name evidence="1" type="primary">serC</name>
    <name type="ordered locus">XF_2326</name>
</gene>
<comment type="function">
    <text evidence="1">Catalyzes the reversible conversion of 3-phosphohydroxypyruvate to phosphoserine and of 3-hydroxy-2-oxo-4-phosphonooxybutanoate to phosphohydroxythreonine.</text>
</comment>
<comment type="catalytic activity">
    <reaction evidence="1">
        <text>O-phospho-L-serine + 2-oxoglutarate = 3-phosphooxypyruvate + L-glutamate</text>
        <dbReference type="Rhea" id="RHEA:14329"/>
        <dbReference type="ChEBI" id="CHEBI:16810"/>
        <dbReference type="ChEBI" id="CHEBI:18110"/>
        <dbReference type="ChEBI" id="CHEBI:29985"/>
        <dbReference type="ChEBI" id="CHEBI:57524"/>
        <dbReference type="EC" id="2.6.1.52"/>
    </reaction>
</comment>
<comment type="catalytic activity">
    <reaction evidence="1">
        <text>4-(phosphooxy)-L-threonine + 2-oxoglutarate = (R)-3-hydroxy-2-oxo-4-phosphooxybutanoate + L-glutamate</text>
        <dbReference type="Rhea" id="RHEA:16573"/>
        <dbReference type="ChEBI" id="CHEBI:16810"/>
        <dbReference type="ChEBI" id="CHEBI:29985"/>
        <dbReference type="ChEBI" id="CHEBI:58452"/>
        <dbReference type="ChEBI" id="CHEBI:58538"/>
        <dbReference type="EC" id="2.6.1.52"/>
    </reaction>
</comment>
<comment type="cofactor">
    <cofactor evidence="1">
        <name>pyridoxal 5'-phosphate</name>
        <dbReference type="ChEBI" id="CHEBI:597326"/>
    </cofactor>
    <text evidence="1">Binds 1 pyridoxal phosphate per subunit.</text>
</comment>
<comment type="pathway">
    <text evidence="1">Amino-acid biosynthesis; L-serine biosynthesis; L-serine from 3-phospho-D-glycerate: step 2/3.</text>
</comment>
<comment type="pathway">
    <text evidence="1">Cofactor biosynthesis; pyridoxine 5'-phosphate biosynthesis; pyridoxine 5'-phosphate from D-erythrose 4-phosphate: step 3/5.</text>
</comment>
<comment type="subunit">
    <text evidence="1">Homodimer.</text>
</comment>
<comment type="subcellular location">
    <subcellularLocation>
        <location evidence="1">Cytoplasm</location>
    </subcellularLocation>
</comment>
<comment type="similarity">
    <text evidence="1">Belongs to the class-V pyridoxal-phosphate-dependent aminotransferase family. SerC subfamily.</text>
</comment>
<protein>
    <recommendedName>
        <fullName evidence="1">Phosphoserine aminotransferase</fullName>
        <ecNumber evidence="1">2.6.1.52</ecNumber>
    </recommendedName>
    <alternativeName>
        <fullName evidence="1">Phosphohydroxythreonine aminotransferase</fullName>
        <shortName evidence="1">PSAT</shortName>
    </alternativeName>
</protein>
<organism>
    <name type="scientific">Xylella fastidiosa (strain 9a5c)</name>
    <dbReference type="NCBI Taxonomy" id="160492"/>
    <lineage>
        <taxon>Bacteria</taxon>
        <taxon>Pseudomonadati</taxon>
        <taxon>Pseudomonadota</taxon>
        <taxon>Gammaproteobacteria</taxon>
        <taxon>Lysobacterales</taxon>
        <taxon>Lysobacteraceae</taxon>
        <taxon>Xylella</taxon>
    </lineage>
</organism>
<feature type="chain" id="PRO_0000150224" description="Phosphoserine aminotransferase">
    <location>
        <begin position="1"/>
        <end position="362"/>
    </location>
</feature>
<feature type="binding site" evidence="1">
    <location>
        <position position="43"/>
    </location>
    <ligand>
        <name>L-glutamate</name>
        <dbReference type="ChEBI" id="CHEBI:29985"/>
    </ligand>
</feature>
<feature type="binding site" evidence="1">
    <location>
        <begin position="77"/>
        <end position="78"/>
    </location>
    <ligand>
        <name>pyridoxal 5'-phosphate</name>
        <dbReference type="ChEBI" id="CHEBI:597326"/>
    </ligand>
</feature>
<feature type="binding site" evidence="1">
    <location>
        <position position="103"/>
    </location>
    <ligand>
        <name>pyridoxal 5'-phosphate</name>
        <dbReference type="ChEBI" id="CHEBI:597326"/>
    </ligand>
</feature>
<feature type="binding site" evidence="1">
    <location>
        <position position="153"/>
    </location>
    <ligand>
        <name>pyridoxal 5'-phosphate</name>
        <dbReference type="ChEBI" id="CHEBI:597326"/>
    </ligand>
</feature>
<feature type="binding site" evidence="1">
    <location>
        <position position="173"/>
    </location>
    <ligand>
        <name>pyridoxal 5'-phosphate</name>
        <dbReference type="ChEBI" id="CHEBI:597326"/>
    </ligand>
</feature>
<feature type="binding site" evidence="1">
    <location>
        <position position="196"/>
    </location>
    <ligand>
        <name>pyridoxal 5'-phosphate</name>
        <dbReference type="ChEBI" id="CHEBI:597326"/>
    </ligand>
</feature>
<feature type="binding site" evidence="1">
    <location>
        <begin position="238"/>
        <end position="239"/>
    </location>
    <ligand>
        <name>pyridoxal 5'-phosphate</name>
        <dbReference type="ChEBI" id="CHEBI:597326"/>
    </ligand>
</feature>
<feature type="modified residue" description="N6-(pyridoxal phosphate)lysine" evidence="1">
    <location>
        <position position="197"/>
    </location>
</feature>
<keyword id="KW-0028">Amino-acid biosynthesis</keyword>
<keyword id="KW-0032">Aminotransferase</keyword>
<keyword id="KW-0963">Cytoplasm</keyword>
<keyword id="KW-0663">Pyridoxal phosphate</keyword>
<keyword id="KW-0664">Pyridoxine biosynthesis</keyword>
<keyword id="KW-0718">Serine biosynthesis</keyword>
<keyword id="KW-0808">Transferase</keyword>